<feature type="chain" id="PRO_0000193414" description="Ubiquinone biosynthesis O-methyltransferase">
    <location>
        <begin position="1"/>
        <end position="242"/>
    </location>
</feature>
<feature type="binding site" evidence="1">
    <location>
        <position position="44"/>
    </location>
    <ligand>
        <name>S-adenosyl-L-methionine</name>
        <dbReference type="ChEBI" id="CHEBI:59789"/>
    </ligand>
</feature>
<feature type="binding site" evidence="1">
    <location>
        <position position="64"/>
    </location>
    <ligand>
        <name>S-adenosyl-L-methionine</name>
        <dbReference type="ChEBI" id="CHEBI:59789"/>
    </ligand>
</feature>
<feature type="binding site" evidence="1">
    <location>
        <position position="85"/>
    </location>
    <ligand>
        <name>S-adenosyl-L-methionine</name>
        <dbReference type="ChEBI" id="CHEBI:59789"/>
    </ligand>
</feature>
<feature type="binding site" evidence="1">
    <location>
        <position position="129"/>
    </location>
    <ligand>
        <name>S-adenosyl-L-methionine</name>
        <dbReference type="ChEBI" id="CHEBI:59789"/>
    </ligand>
</feature>
<keyword id="KW-0489">Methyltransferase</keyword>
<keyword id="KW-0949">S-adenosyl-L-methionine</keyword>
<keyword id="KW-0808">Transferase</keyword>
<keyword id="KW-0831">Ubiquinone biosynthesis</keyword>
<dbReference type="EC" id="2.1.1.222" evidence="1"/>
<dbReference type="EC" id="2.1.1.64" evidence="1"/>
<dbReference type="EMBL" id="BX936398">
    <property type="protein sequence ID" value="CAH20495.1"/>
    <property type="molecule type" value="Genomic_DNA"/>
</dbReference>
<dbReference type="RefSeq" id="WP_002210820.1">
    <property type="nucleotide sequence ID" value="NZ_CP009712.1"/>
</dbReference>
<dbReference type="SMR" id="Q66CZ4"/>
<dbReference type="GeneID" id="57977354"/>
<dbReference type="KEGG" id="ypo:BZ17_1272"/>
<dbReference type="KEGG" id="yps:YPTB1255"/>
<dbReference type="PATRIC" id="fig|273123.14.peg.1359"/>
<dbReference type="UniPathway" id="UPA00232"/>
<dbReference type="Proteomes" id="UP000001011">
    <property type="component" value="Chromosome"/>
</dbReference>
<dbReference type="GO" id="GO:0102208">
    <property type="term" value="F:2-polyprenyl-6-hydroxyphenol methylase activity"/>
    <property type="evidence" value="ECO:0007669"/>
    <property type="project" value="UniProtKB-EC"/>
</dbReference>
<dbReference type="GO" id="GO:0061542">
    <property type="term" value="F:3-demethylubiquinol 3-O-methyltransferase activity"/>
    <property type="evidence" value="ECO:0007669"/>
    <property type="project" value="UniProtKB-UniRule"/>
</dbReference>
<dbReference type="GO" id="GO:0010420">
    <property type="term" value="F:polyprenyldihydroxybenzoate methyltransferase activity"/>
    <property type="evidence" value="ECO:0007669"/>
    <property type="project" value="InterPro"/>
</dbReference>
<dbReference type="GO" id="GO:0032259">
    <property type="term" value="P:methylation"/>
    <property type="evidence" value="ECO:0007669"/>
    <property type="project" value="UniProtKB-KW"/>
</dbReference>
<dbReference type="CDD" id="cd02440">
    <property type="entry name" value="AdoMet_MTases"/>
    <property type="match status" value="1"/>
</dbReference>
<dbReference type="FunFam" id="3.40.50.150:FF:000028">
    <property type="entry name" value="Ubiquinone biosynthesis O-methyltransferase"/>
    <property type="match status" value="1"/>
</dbReference>
<dbReference type="Gene3D" id="3.40.50.150">
    <property type="entry name" value="Vaccinia Virus protein VP39"/>
    <property type="match status" value="1"/>
</dbReference>
<dbReference type="HAMAP" id="MF_00472">
    <property type="entry name" value="UbiG"/>
    <property type="match status" value="1"/>
</dbReference>
<dbReference type="InterPro" id="IPR029063">
    <property type="entry name" value="SAM-dependent_MTases_sf"/>
</dbReference>
<dbReference type="InterPro" id="IPR010233">
    <property type="entry name" value="UbiG_MeTrfase"/>
</dbReference>
<dbReference type="NCBIfam" id="TIGR01983">
    <property type="entry name" value="UbiG"/>
    <property type="match status" value="1"/>
</dbReference>
<dbReference type="PANTHER" id="PTHR43464">
    <property type="entry name" value="METHYLTRANSFERASE"/>
    <property type="match status" value="1"/>
</dbReference>
<dbReference type="PANTHER" id="PTHR43464:SF19">
    <property type="entry name" value="UBIQUINONE BIOSYNTHESIS O-METHYLTRANSFERASE, MITOCHONDRIAL"/>
    <property type="match status" value="1"/>
</dbReference>
<dbReference type="Pfam" id="PF13489">
    <property type="entry name" value="Methyltransf_23"/>
    <property type="match status" value="1"/>
</dbReference>
<dbReference type="SUPFAM" id="SSF53335">
    <property type="entry name" value="S-adenosyl-L-methionine-dependent methyltransferases"/>
    <property type="match status" value="1"/>
</dbReference>
<name>UBIG_YERPS</name>
<gene>
    <name evidence="1" type="primary">ubiG</name>
    <name type="ordered locus">YPTB1255</name>
</gene>
<proteinExistence type="inferred from homology"/>
<reference key="1">
    <citation type="journal article" date="2004" name="Proc. Natl. Acad. Sci. U.S.A.">
        <title>Insights into the evolution of Yersinia pestis through whole-genome comparison with Yersinia pseudotuberculosis.</title>
        <authorList>
            <person name="Chain P.S.G."/>
            <person name="Carniel E."/>
            <person name="Larimer F.W."/>
            <person name="Lamerdin J."/>
            <person name="Stoutland P.O."/>
            <person name="Regala W.M."/>
            <person name="Georgescu A.M."/>
            <person name="Vergez L.M."/>
            <person name="Land M.L."/>
            <person name="Motin V.L."/>
            <person name="Brubaker R.R."/>
            <person name="Fowler J."/>
            <person name="Hinnebusch J."/>
            <person name="Marceau M."/>
            <person name="Medigue C."/>
            <person name="Simonet M."/>
            <person name="Chenal-Francisque V."/>
            <person name="Souza B."/>
            <person name="Dacheux D."/>
            <person name="Elliott J.M."/>
            <person name="Derbise A."/>
            <person name="Hauser L.J."/>
            <person name="Garcia E."/>
        </authorList>
    </citation>
    <scope>NUCLEOTIDE SEQUENCE [LARGE SCALE GENOMIC DNA]</scope>
    <source>
        <strain>IP32953</strain>
    </source>
</reference>
<comment type="function">
    <text evidence="1">O-methyltransferase that catalyzes the 2 O-methylation steps in the ubiquinone biosynthetic pathway.</text>
</comment>
<comment type="catalytic activity">
    <reaction evidence="1">
        <text>a 3-demethylubiquinol + S-adenosyl-L-methionine = a ubiquinol + S-adenosyl-L-homocysteine + H(+)</text>
        <dbReference type="Rhea" id="RHEA:44380"/>
        <dbReference type="Rhea" id="RHEA-COMP:9566"/>
        <dbReference type="Rhea" id="RHEA-COMP:10914"/>
        <dbReference type="ChEBI" id="CHEBI:15378"/>
        <dbReference type="ChEBI" id="CHEBI:17976"/>
        <dbReference type="ChEBI" id="CHEBI:57856"/>
        <dbReference type="ChEBI" id="CHEBI:59789"/>
        <dbReference type="ChEBI" id="CHEBI:84422"/>
        <dbReference type="EC" id="2.1.1.64"/>
    </reaction>
</comment>
<comment type="catalytic activity">
    <reaction evidence="1">
        <text>a 3-(all-trans-polyprenyl)benzene-1,2-diol + S-adenosyl-L-methionine = a 2-methoxy-6-(all-trans-polyprenyl)phenol + S-adenosyl-L-homocysteine + H(+)</text>
        <dbReference type="Rhea" id="RHEA:31411"/>
        <dbReference type="Rhea" id="RHEA-COMP:9550"/>
        <dbReference type="Rhea" id="RHEA-COMP:9551"/>
        <dbReference type="ChEBI" id="CHEBI:15378"/>
        <dbReference type="ChEBI" id="CHEBI:57856"/>
        <dbReference type="ChEBI" id="CHEBI:59789"/>
        <dbReference type="ChEBI" id="CHEBI:62729"/>
        <dbReference type="ChEBI" id="CHEBI:62731"/>
        <dbReference type="EC" id="2.1.1.222"/>
    </reaction>
</comment>
<comment type="pathway">
    <text evidence="1">Cofactor biosynthesis; ubiquinone biosynthesis.</text>
</comment>
<comment type="similarity">
    <text evidence="1">Belongs to the methyltransferase superfamily. UbiG/COQ3 family.</text>
</comment>
<protein>
    <recommendedName>
        <fullName evidence="1">Ubiquinone biosynthesis O-methyltransferase</fullName>
    </recommendedName>
    <alternativeName>
        <fullName evidence="1">2-polyprenyl-6-hydroxyphenol methylase</fullName>
        <ecNumber evidence="1">2.1.1.222</ecNumber>
    </alternativeName>
    <alternativeName>
        <fullName evidence="1">3-demethylubiquinone 3-O-methyltransferase</fullName>
        <ecNumber evidence="1">2.1.1.64</ecNumber>
    </alternativeName>
</protein>
<organism>
    <name type="scientific">Yersinia pseudotuberculosis serotype I (strain IP32953)</name>
    <dbReference type="NCBI Taxonomy" id="273123"/>
    <lineage>
        <taxon>Bacteria</taxon>
        <taxon>Pseudomonadati</taxon>
        <taxon>Pseudomonadota</taxon>
        <taxon>Gammaproteobacteria</taxon>
        <taxon>Enterobacterales</taxon>
        <taxon>Yersiniaceae</taxon>
        <taxon>Yersinia</taxon>
    </lineage>
</organism>
<accession>Q66CZ4</accession>
<evidence type="ECO:0000255" key="1">
    <source>
        <dbReference type="HAMAP-Rule" id="MF_00472"/>
    </source>
</evidence>
<sequence>MRAKTTSRHHNVDEQEIAKFEAVASRWWDLEGEFKPLHRINPLRLNYILQRSGGIFEKKVLDVGCGGGILAESMAREGAQVTGLDMGYEPLQVARLHALETGVKLEYVQETVENHAQQHPQHYDVVTCMEMLEHVPDPASVVRACAQLVKPGGHVFFSTINRNTKSWLMAVVGAEYLLKMVPKGTHDAKKFIRPSELIGWVDQTPLLERHIIGLHYNPITDHFKLGRNVDVNYMVHTQRDSE</sequence>